<dbReference type="EC" id="6.1.1.19" evidence="2"/>
<dbReference type="EMBL" id="AK156182">
    <property type="protein sequence ID" value="BAE33614.1"/>
    <property type="molecule type" value="mRNA"/>
</dbReference>
<dbReference type="EMBL" id="BC024878">
    <property type="protein sequence ID" value="AAH24878.1"/>
    <property type="molecule type" value="mRNA"/>
</dbReference>
<dbReference type="CCDS" id="CCDS18029.1"/>
<dbReference type="RefSeq" id="NP_852071.2">
    <property type="nucleotide sequence ID" value="NM_181406.4"/>
</dbReference>
<dbReference type="SMR" id="Q3U186"/>
<dbReference type="BioGRID" id="224553">
    <property type="interactions" value="14"/>
</dbReference>
<dbReference type="FunCoup" id="Q3U186">
    <property type="interactions" value="2255"/>
</dbReference>
<dbReference type="STRING" id="10090.ENSMUSP00000029968"/>
<dbReference type="GlyGen" id="Q3U186">
    <property type="glycosylation" value="1 site, 1 O-linked glycan (1 site)"/>
</dbReference>
<dbReference type="iPTMnet" id="Q3U186"/>
<dbReference type="PhosphoSitePlus" id="Q3U186"/>
<dbReference type="SwissPalm" id="Q3U186"/>
<dbReference type="jPOST" id="Q3U186"/>
<dbReference type="PaxDb" id="10090-ENSMUSP00000029968"/>
<dbReference type="PeptideAtlas" id="Q3U186"/>
<dbReference type="ProteomicsDB" id="253443"/>
<dbReference type="Pumba" id="Q3U186"/>
<dbReference type="Antibodypedia" id="31811">
    <property type="antibodies" value="73 antibodies from 20 providers"/>
</dbReference>
<dbReference type="DNASU" id="109093"/>
<dbReference type="Ensembl" id="ENSMUST00000029968.14">
    <property type="protein sequence ID" value="ENSMUSP00000029968.8"/>
    <property type="gene ID" value="ENSMUSG00000028292.15"/>
</dbReference>
<dbReference type="GeneID" id="109093"/>
<dbReference type="KEGG" id="mmu:109093"/>
<dbReference type="UCSC" id="uc008sgf.2">
    <property type="organism name" value="mouse"/>
</dbReference>
<dbReference type="AGR" id="MGI:1923596"/>
<dbReference type="CTD" id="57038"/>
<dbReference type="MGI" id="MGI:1923596">
    <property type="gene designation" value="Rars2"/>
</dbReference>
<dbReference type="VEuPathDB" id="HostDB:ENSMUSG00000028292"/>
<dbReference type="eggNOG" id="KOG1195">
    <property type="taxonomic scope" value="Eukaryota"/>
</dbReference>
<dbReference type="GeneTree" id="ENSGT00530000063407"/>
<dbReference type="HOGENOM" id="CLU_006406_6_2_1"/>
<dbReference type="InParanoid" id="Q3U186"/>
<dbReference type="OMA" id="YEFKWER"/>
<dbReference type="OrthoDB" id="68056at2759"/>
<dbReference type="PhylomeDB" id="Q3U186"/>
<dbReference type="TreeFam" id="TF300888"/>
<dbReference type="BioGRID-ORCS" id="109093">
    <property type="hits" value="18 hits in 78 CRISPR screens"/>
</dbReference>
<dbReference type="PRO" id="PR:Q3U186"/>
<dbReference type="Proteomes" id="UP000000589">
    <property type="component" value="Chromosome 4"/>
</dbReference>
<dbReference type="RNAct" id="Q3U186">
    <property type="molecule type" value="protein"/>
</dbReference>
<dbReference type="Bgee" id="ENSMUSG00000028292">
    <property type="expression patterns" value="Expressed in ileal epithelium and 265 other cell types or tissues"/>
</dbReference>
<dbReference type="ExpressionAtlas" id="Q3U186">
    <property type="expression patterns" value="baseline and differential"/>
</dbReference>
<dbReference type="GO" id="GO:0031966">
    <property type="term" value="C:mitochondrial membrane"/>
    <property type="evidence" value="ECO:0000250"/>
    <property type="project" value="UniProtKB"/>
</dbReference>
<dbReference type="GO" id="GO:0005739">
    <property type="term" value="C:mitochondrion"/>
    <property type="evidence" value="ECO:0007005"/>
    <property type="project" value="MGI"/>
</dbReference>
<dbReference type="GO" id="GO:0004814">
    <property type="term" value="F:arginine-tRNA ligase activity"/>
    <property type="evidence" value="ECO:0000250"/>
    <property type="project" value="UniProtKB"/>
</dbReference>
<dbReference type="GO" id="GO:0005524">
    <property type="term" value="F:ATP binding"/>
    <property type="evidence" value="ECO:0007669"/>
    <property type="project" value="UniProtKB-KW"/>
</dbReference>
<dbReference type="GO" id="GO:0006420">
    <property type="term" value="P:arginyl-tRNA aminoacylation"/>
    <property type="evidence" value="ECO:0007669"/>
    <property type="project" value="InterPro"/>
</dbReference>
<dbReference type="CDD" id="cd00671">
    <property type="entry name" value="ArgRS_core"/>
    <property type="match status" value="1"/>
</dbReference>
<dbReference type="FunFam" id="1.10.730.10:FF:000006">
    <property type="entry name" value="Arginyl-tRNA synthetase 2, mitochondrial"/>
    <property type="match status" value="1"/>
</dbReference>
<dbReference type="FunFam" id="3.40.50.620:FF:000058">
    <property type="entry name" value="Mitochondrial arginyl-tRNA synthetase"/>
    <property type="match status" value="1"/>
</dbReference>
<dbReference type="FunFam" id="3.30.1360.70:FF:000004">
    <property type="entry name" value="Probable arginine--tRNA ligase, mitochondrial"/>
    <property type="match status" value="1"/>
</dbReference>
<dbReference type="Gene3D" id="3.30.1360.70">
    <property type="entry name" value="Arginyl tRNA synthetase N-terminal domain"/>
    <property type="match status" value="1"/>
</dbReference>
<dbReference type="Gene3D" id="3.40.50.620">
    <property type="entry name" value="HUPs"/>
    <property type="match status" value="1"/>
</dbReference>
<dbReference type="Gene3D" id="1.10.730.10">
    <property type="entry name" value="Isoleucyl-tRNA Synthetase, Domain 1"/>
    <property type="match status" value="1"/>
</dbReference>
<dbReference type="InterPro" id="IPR001412">
    <property type="entry name" value="aa-tRNA-synth_I_CS"/>
</dbReference>
<dbReference type="InterPro" id="IPR001278">
    <property type="entry name" value="Arg-tRNA-ligase"/>
</dbReference>
<dbReference type="InterPro" id="IPR036695">
    <property type="entry name" value="Arg-tRNA-synth_N_sf"/>
</dbReference>
<dbReference type="InterPro" id="IPR035684">
    <property type="entry name" value="ArgRS_core"/>
</dbReference>
<dbReference type="InterPro" id="IPR008909">
    <property type="entry name" value="DALR_anticod-bd"/>
</dbReference>
<dbReference type="InterPro" id="IPR014729">
    <property type="entry name" value="Rossmann-like_a/b/a_fold"/>
</dbReference>
<dbReference type="InterPro" id="IPR009080">
    <property type="entry name" value="tRNAsynth_Ia_anticodon-bd"/>
</dbReference>
<dbReference type="NCBIfam" id="TIGR00456">
    <property type="entry name" value="argS"/>
    <property type="match status" value="1"/>
</dbReference>
<dbReference type="PANTHER" id="PTHR11956:SF11">
    <property type="entry name" value="ARGININE--TRNA LIGASE, MITOCHONDRIAL-RELATED"/>
    <property type="match status" value="1"/>
</dbReference>
<dbReference type="PANTHER" id="PTHR11956">
    <property type="entry name" value="ARGINYL-TRNA SYNTHETASE"/>
    <property type="match status" value="1"/>
</dbReference>
<dbReference type="Pfam" id="PF05746">
    <property type="entry name" value="DALR_1"/>
    <property type="match status" value="1"/>
</dbReference>
<dbReference type="Pfam" id="PF00750">
    <property type="entry name" value="tRNA-synt_1d"/>
    <property type="match status" value="1"/>
</dbReference>
<dbReference type="PRINTS" id="PR01038">
    <property type="entry name" value="TRNASYNTHARG"/>
</dbReference>
<dbReference type="SMART" id="SM00836">
    <property type="entry name" value="DALR_1"/>
    <property type="match status" value="1"/>
</dbReference>
<dbReference type="SUPFAM" id="SSF47323">
    <property type="entry name" value="Anticodon-binding domain of a subclass of class I aminoacyl-tRNA synthetases"/>
    <property type="match status" value="1"/>
</dbReference>
<dbReference type="SUPFAM" id="SSF55190">
    <property type="entry name" value="Arginyl-tRNA synthetase (ArgRS), N-terminal 'additional' domain"/>
    <property type="match status" value="1"/>
</dbReference>
<dbReference type="SUPFAM" id="SSF52374">
    <property type="entry name" value="Nucleotidylyl transferase"/>
    <property type="match status" value="1"/>
</dbReference>
<dbReference type="PROSITE" id="PS00178">
    <property type="entry name" value="AA_TRNA_LIGASE_I"/>
    <property type="match status" value="1"/>
</dbReference>
<name>SYRM_MOUSE</name>
<reference key="1">
    <citation type="journal article" date="2005" name="Science">
        <title>The transcriptional landscape of the mammalian genome.</title>
        <authorList>
            <person name="Carninci P."/>
            <person name="Kasukawa T."/>
            <person name="Katayama S."/>
            <person name="Gough J."/>
            <person name="Frith M.C."/>
            <person name="Maeda N."/>
            <person name="Oyama R."/>
            <person name="Ravasi T."/>
            <person name="Lenhard B."/>
            <person name="Wells C."/>
            <person name="Kodzius R."/>
            <person name="Shimokawa K."/>
            <person name="Bajic V.B."/>
            <person name="Brenner S.E."/>
            <person name="Batalov S."/>
            <person name="Forrest A.R."/>
            <person name="Zavolan M."/>
            <person name="Davis M.J."/>
            <person name="Wilming L.G."/>
            <person name="Aidinis V."/>
            <person name="Allen J.E."/>
            <person name="Ambesi-Impiombato A."/>
            <person name="Apweiler R."/>
            <person name="Aturaliya R.N."/>
            <person name="Bailey T.L."/>
            <person name="Bansal M."/>
            <person name="Baxter L."/>
            <person name="Beisel K.W."/>
            <person name="Bersano T."/>
            <person name="Bono H."/>
            <person name="Chalk A.M."/>
            <person name="Chiu K.P."/>
            <person name="Choudhary V."/>
            <person name="Christoffels A."/>
            <person name="Clutterbuck D.R."/>
            <person name="Crowe M.L."/>
            <person name="Dalla E."/>
            <person name="Dalrymple B.P."/>
            <person name="de Bono B."/>
            <person name="Della Gatta G."/>
            <person name="di Bernardo D."/>
            <person name="Down T."/>
            <person name="Engstrom P."/>
            <person name="Fagiolini M."/>
            <person name="Faulkner G."/>
            <person name="Fletcher C.F."/>
            <person name="Fukushima T."/>
            <person name="Furuno M."/>
            <person name="Futaki S."/>
            <person name="Gariboldi M."/>
            <person name="Georgii-Hemming P."/>
            <person name="Gingeras T.R."/>
            <person name="Gojobori T."/>
            <person name="Green R.E."/>
            <person name="Gustincich S."/>
            <person name="Harbers M."/>
            <person name="Hayashi Y."/>
            <person name="Hensch T.K."/>
            <person name="Hirokawa N."/>
            <person name="Hill D."/>
            <person name="Huminiecki L."/>
            <person name="Iacono M."/>
            <person name="Ikeo K."/>
            <person name="Iwama A."/>
            <person name="Ishikawa T."/>
            <person name="Jakt M."/>
            <person name="Kanapin A."/>
            <person name="Katoh M."/>
            <person name="Kawasawa Y."/>
            <person name="Kelso J."/>
            <person name="Kitamura H."/>
            <person name="Kitano H."/>
            <person name="Kollias G."/>
            <person name="Krishnan S.P."/>
            <person name="Kruger A."/>
            <person name="Kummerfeld S.K."/>
            <person name="Kurochkin I.V."/>
            <person name="Lareau L.F."/>
            <person name="Lazarevic D."/>
            <person name="Lipovich L."/>
            <person name="Liu J."/>
            <person name="Liuni S."/>
            <person name="McWilliam S."/>
            <person name="Madan Babu M."/>
            <person name="Madera M."/>
            <person name="Marchionni L."/>
            <person name="Matsuda H."/>
            <person name="Matsuzawa S."/>
            <person name="Miki H."/>
            <person name="Mignone F."/>
            <person name="Miyake S."/>
            <person name="Morris K."/>
            <person name="Mottagui-Tabar S."/>
            <person name="Mulder N."/>
            <person name="Nakano N."/>
            <person name="Nakauchi H."/>
            <person name="Ng P."/>
            <person name="Nilsson R."/>
            <person name="Nishiguchi S."/>
            <person name="Nishikawa S."/>
            <person name="Nori F."/>
            <person name="Ohara O."/>
            <person name="Okazaki Y."/>
            <person name="Orlando V."/>
            <person name="Pang K.C."/>
            <person name="Pavan W.J."/>
            <person name="Pavesi G."/>
            <person name="Pesole G."/>
            <person name="Petrovsky N."/>
            <person name="Piazza S."/>
            <person name="Reed J."/>
            <person name="Reid J.F."/>
            <person name="Ring B.Z."/>
            <person name="Ringwald M."/>
            <person name="Rost B."/>
            <person name="Ruan Y."/>
            <person name="Salzberg S.L."/>
            <person name="Sandelin A."/>
            <person name="Schneider C."/>
            <person name="Schoenbach C."/>
            <person name="Sekiguchi K."/>
            <person name="Semple C.A."/>
            <person name="Seno S."/>
            <person name="Sessa L."/>
            <person name="Sheng Y."/>
            <person name="Shibata Y."/>
            <person name="Shimada H."/>
            <person name="Shimada K."/>
            <person name="Silva D."/>
            <person name="Sinclair B."/>
            <person name="Sperling S."/>
            <person name="Stupka E."/>
            <person name="Sugiura K."/>
            <person name="Sultana R."/>
            <person name="Takenaka Y."/>
            <person name="Taki K."/>
            <person name="Tammoja K."/>
            <person name="Tan S.L."/>
            <person name="Tang S."/>
            <person name="Taylor M.S."/>
            <person name="Tegner J."/>
            <person name="Teichmann S.A."/>
            <person name="Ueda H.R."/>
            <person name="van Nimwegen E."/>
            <person name="Verardo R."/>
            <person name="Wei C.L."/>
            <person name="Yagi K."/>
            <person name="Yamanishi H."/>
            <person name="Zabarovsky E."/>
            <person name="Zhu S."/>
            <person name="Zimmer A."/>
            <person name="Hide W."/>
            <person name="Bult C."/>
            <person name="Grimmond S.M."/>
            <person name="Teasdale R.D."/>
            <person name="Liu E.T."/>
            <person name="Brusic V."/>
            <person name="Quackenbush J."/>
            <person name="Wahlestedt C."/>
            <person name="Mattick J.S."/>
            <person name="Hume D.A."/>
            <person name="Kai C."/>
            <person name="Sasaki D."/>
            <person name="Tomaru Y."/>
            <person name="Fukuda S."/>
            <person name="Kanamori-Katayama M."/>
            <person name="Suzuki M."/>
            <person name="Aoki J."/>
            <person name="Arakawa T."/>
            <person name="Iida J."/>
            <person name="Imamura K."/>
            <person name="Itoh M."/>
            <person name="Kato T."/>
            <person name="Kawaji H."/>
            <person name="Kawagashira N."/>
            <person name="Kawashima T."/>
            <person name="Kojima M."/>
            <person name="Kondo S."/>
            <person name="Konno H."/>
            <person name="Nakano K."/>
            <person name="Ninomiya N."/>
            <person name="Nishio T."/>
            <person name="Okada M."/>
            <person name="Plessy C."/>
            <person name="Shibata K."/>
            <person name="Shiraki T."/>
            <person name="Suzuki S."/>
            <person name="Tagami M."/>
            <person name="Waki K."/>
            <person name="Watahiki A."/>
            <person name="Okamura-Oho Y."/>
            <person name="Suzuki H."/>
            <person name="Kawai J."/>
            <person name="Hayashizaki Y."/>
        </authorList>
    </citation>
    <scope>NUCLEOTIDE SEQUENCE [LARGE SCALE MRNA]</scope>
    <source>
        <strain>NOD</strain>
        <tissue>Spleen</tissue>
    </source>
</reference>
<reference key="2">
    <citation type="journal article" date="2004" name="Genome Res.">
        <title>The status, quality, and expansion of the NIH full-length cDNA project: the Mammalian Gene Collection (MGC).</title>
        <authorList>
            <consortium name="The MGC Project Team"/>
        </authorList>
    </citation>
    <scope>NUCLEOTIDE SEQUENCE [LARGE SCALE MRNA]</scope>
    <source>
        <strain>Czech II</strain>
        <tissue>Mammary gland</tissue>
    </source>
</reference>
<reference key="3">
    <citation type="journal article" date="2010" name="Cell">
        <title>A tissue-specific atlas of mouse protein phosphorylation and expression.</title>
        <authorList>
            <person name="Huttlin E.L."/>
            <person name="Jedrychowski M.P."/>
            <person name="Elias J.E."/>
            <person name="Goswami T."/>
            <person name="Rad R."/>
            <person name="Beausoleil S.A."/>
            <person name="Villen J."/>
            <person name="Haas W."/>
            <person name="Sowa M.E."/>
            <person name="Gygi S.P."/>
        </authorList>
    </citation>
    <scope>IDENTIFICATION BY MASS SPECTROMETRY [LARGE SCALE ANALYSIS]</scope>
    <source>
        <tissue>Brain</tissue>
        <tissue>Brown adipose tissue</tissue>
        <tissue>Heart</tissue>
        <tissue>Kidney</tissue>
        <tissue>Liver</tissue>
        <tissue>Lung</tissue>
        <tissue>Spleen</tissue>
        <tissue>Testis</tissue>
    </source>
</reference>
<reference key="4">
    <citation type="journal article" date="2013" name="Proc. Natl. Acad. Sci. U.S.A.">
        <title>Label-free quantitative proteomics of the lysine acetylome in mitochondria identifies substrates of SIRT3 in metabolic pathways.</title>
        <authorList>
            <person name="Rardin M.J."/>
            <person name="Newman J.C."/>
            <person name="Held J.M."/>
            <person name="Cusack M.P."/>
            <person name="Sorensen D.J."/>
            <person name="Li B."/>
            <person name="Schilling B."/>
            <person name="Mooney S.D."/>
            <person name="Kahn C.R."/>
            <person name="Verdin E."/>
            <person name="Gibson B.W."/>
        </authorList>
    </citation>
    <scope>ACETYLATION [LARGE SCALE ANALYSIS] AT LYS-568</scope>
    <scope>IDENTIFICATION BY MASS SPECTROMETRY [LARGE SCALE ANALYSIS]</scope>
    <source>
        <tissue>Liver</tissue>
    </source>
</reference>
<keyword id="KW-0007">Acetylation</keyword>
<keyword id="KW-0030">Aminoacyl-tRNA synthetase</keyword>
<keyword id="KW-0067">ATP-binding</keyword>
<keyword id="KW-0436">Ligase</keyword>
<keyword id="KW-0472">Membrane</keyword>
<keyword id="KW-0496">Mitochondrion</keyword>
<keyword id="KW-0547">Nucleotide-binding</keyword>
<keyword id="KW-0648">Protein biosynthesis</keyword>
<keyword id="KW-1185">Reference proteome</keyword>
<keyword id="KW-0809">Transit peptide</keyword>
<proteinExistence type="evidence at protein level"/>
<gene>
    <name type="primary">Rars2</name>
    <name type="synonym">Rarsl</name>
</gene>
<comment type="function">
    <text evidence="2">Catalyzes the attachment of arginine to tRNA(Arg) in a two-step reaction: arginine is first activated by ATP to form Arg-AMP and then transferred to the acceptor end of tRNA(Arg).</text>
</comment>
<comment type="catalytic activity">
    <reaction evidence="2">
        <text>tRNA(Arg) + L-arginine + ATP = L-arginyl-tRNA(Arg) + AMP + diphosphate</text>
        <dbReference type="Rhea" id="RHEA:20301"/>
        <dbReference type="Rhea" id="RHEA-COMP:9658"/>
        <dbReference type="Rhea" id="RHEA-COMP:9673"/>
        <dbReference type="ChEBI" id="CHEBI:30616"/>
        <dbReference type="ChEBI" id="CHEBI:32682"/>
        <dbReference type="ChEBI" id="CHEBI:33019"/>
        <dbReference type="ChEBI" id="CHEBI:78442"/>
        <dbReference type="ChEBI" id="CHEBI:78513"/>
        <dbReference type="ChEBI" id="CHEBI:456215"/>
        <dbReference type="EC" id="6.1.1.19"/>
    </reaction>
</comment>
<comment type="subcellular location">
    <subcellularLocation>
        <location evidence="2">Mitochondrion membrane</location>
    </subcellularLocation>
</comment>
<comment type="similarity">
    <text evidence="4">Belongs to the class-I aminoacyl-tRNA synthetase family.</text>
</comment>
<accession>Q3U186</accession>
<accession>Q8QZU7</accession>
<sequence>MACGFRRSIACQLSRVLALPPESLIKSISAVPVSKKEEVADFQLSVDSLLEDNNHKSQVDTQDQARRLAEKLKCDTVVTAISAGPRTLNFKINRELLTKAVLQQVTEDGCKYGLKSELFSDLPKKRIVVEFSSPNIAKKFHVGHLRSTIIGNFIANLKEALGHQVTRINYIGDWGMQFGLLGTGFQLFGYEEKLQTNPLQHLFDVYVQVNKEATDDKNVTKLAHEFFHRLEMGDTQALSLWQRFRDLSIEEYTQIYKRLGIYFDEYSGESFYREKSQDVLKLLDSKGLLQKTAEGNVVVDLSGTGDLSSVCTVMRSDGTSLYATRDLAAAIHRMDKYNFDTMIYVADKGQRRHFQQVFQMLKIMGYDWAERCQHVPFGIVKGMKTRRGGVTFLEDVLNEVQSRMLQNMASIKTTKQLENPQETAERVGLAAVIIQDFRGTLLSDYQFSWDRVFQSRGDTGVFLQYTHARLCSLEETFGCGYLNDSNVACLQEPQSVSILQHLLRFDEVLYLSSQDLQPKHIVSYLLTLSHLAAVAHKTLQVKDSPPDVAGARLHLFKAVRSVLANGMKLLGITPVCRM</sequence>
<feature type="transit peptide" description="Mitochondrion" evidence="3">
    <location>
        <begin position="1"/>
        <end position="16"/>
    </location>
</feature>
<feature type="chain" id="PRO_0000250732" description="Probable arginine--tRNA ligase, mitochondrial">
    <location>
        <begin position="17"/>
        <end position="578"/>
    </location>
</feature>
<feature type="short sequence motif" description="'HIGH' region">
    <location>
        <begin position="133"/>
        <end position="144"/>
    </location>
</feature>
<feature type="binding site" evidence="1">
    <location>
        <begin position="133"/>
        <end position="135"/>
    </location>
    <ligand>
        <name>L-arginine</name>
        <dbReference type="ChEBI" id="CHEBI:32682"/>
    </ligand>
</feature>
<feature type="binding site" evidence="1">
    <location>
        <position position="144"/>
    </location>
    <ligand>
        <name>L-arginine</name>
        <dbReference type="ChEBI" id="CHEBI:32682"/>
    </ligand>
</feature>
<feature type="binding site" evidence="1">
    <location>
        <position position="322"/>
    </location>
    <ligand>
        <name>L-arginine</name>
        <dbReference type="ChEBI" id="CHEBI:32682"/>
    </ligand>
</feature>
<feature type="binding site" evidence="1">
    <location>
        <position position="326"/>
    </location>
    <ligand>
        <name>L-arginine</name>
        <dbReference type="ChEBI" id="CHEBI:32682"/>
    </ligand>
</feature>
<feature type="binding site" evidence="1">
    <location>
        <position position="350"/>
    </location>
    <ligand>
        <name>L-arginine</name>
        <dbReference type="ChEBI" id="CHEBI:32682"/>
    </ligand>
</feature>
<feature type="modified residue" description="N6-acetyllysine" evidence="5">
    <location>
        <position position="568"/>
    </location>
</feature>
<feature type="sequence conflict" description="In Ref. 2; AAH24878." evidence="4" ref="2">
    <original>D</original>
    <variation>G</variation>
    <location>
        <position position="306"/>
    </location>
</feature>
<feature type="sequence conflict" description="In Ref. 2; AAH24878." evidence="4" ref="2">
    <original>Q</original>
    <variation>K</variation>
    <location>
        <position position="540"/>
    </location>
</feature>
<protein>
    <recommendedName>
        <fullName>Probable arginine--tRNA ligase, mitochondrial</fullName>
        <ecNumber evidence="2">6.1.1.19</ecNumber>
    </recommendedName>
    <alternativeName>
        <fullName>Arginyl-tRNA synthetase</fullName>
        <shortName>ArgRS</shortName>
    </alternativeName>
</protein>
<evidence type="ECO:0000250" key="1">
    <source>
        <dbReference type="UniProtKB" id="P54136"/>
    </source>
</evidence>
<evidence type="ECO:0000250" key="2">
    <source>
        <dbReference type="UniProtKB" id="Q5T160"/>
    </source>
</evidence>
<evidence type="ECO:0000255" key="3"/>
<evidence type="ECO:0000305" key="4"/>
<evidence type="ECO:0007744" key="5">
    <source>
    </source>
</evidence>
<organism>
    <name type="scientific">Mus musculus</name>
    <name type="common">Mouse</name>
    <dbReference type="NCBI Taxonomy" id="10090"/>
    <lineage>
        <taxon>Eukaryota</taxon>
        <taxon>Metazoa</taxon>
        <taxon>Chordata</taxon>
        <taxon>Craniata</taxon>
        <taxon>Vertebrata</taxon>
        <taxon>Euteleostomi</taxon>
        <taxon>Mammalia</taxon>
        <taxon>Eutheria</taxon>
        <taxon>Euarchontoglires</taxon>
        <taxon>Glires</taxon>
        <taxon>Rodentia</taxon>
        <taxon>Myomorpha</taxon>
        <taxon>Muroidea</taxon>
        <taxon>Muridae</taxon>
        <taxon>Murinae</taxon>
        <taxon>Mus</taxon>
        <taxon>Mus</taxon>
    </lineage>
</organism>